<evidence type="ECO:0000255" key="1">
    <source>
        <dbReference type="HAMAP-Rule" id="MF_00531"/>
    </source>
</evidence>
<evidence type="ECO:0000256" key="2">
    <source>
        <dbReference type="SAM" id="MobiDB-lite"/>
    </source>
</evidence>
<evidence type="ECO:0000305" key="3"/>
<accession>A6W5U2</accession>
<gene>
    <name evidence="1" type="primary">rpsS</name>
    <name type="ordered locus">Krad_0692</name>
</gene>
<organism>
    <name type="scientific">Kineococcus radiotolerans (strain ATCC BAA-149 / DSM 14245 / SRS30216)</name>
    <dbReference type="NCBI Taxonomy" id="266940"/>
    <lineage>
        <taxon>Bacteria</taxon>
        <taxon>Bacillati</taxon>
        <taxon>Actinomycetota</taxon>
        <taxon>Actinomycetes</taxon>
        <taxon>Kineosporiales</taxon>
        <taxon>Kineosporiaceae</taxon>
        <taxon>Kineococcus</taxon>
    </lineage>
</organism>
<sequence>MPRSLKKGPFVDDHLQKKVDAQNEAGTHNVIRTWSRRSVVTPDFLGHTFAVHDGRKHTPVFVTESMVGHKLGEFAPTRTFKGHEKDDRKGRRR</sequence>
<feature type="chain" id="PRO_1000081776" description="Small ribosomal subunit protein uS19">
    <location>
        <begin position="1"/>
        <end position="93"/>
    </location>
</feature>
<feature type="region of interest" description="Disordered" evidence="2">
    <location>
        <begin position="1"/>
        <end position="24"/>
    </location>
</feature>
<feature type="region of interest" description="Disordered" evidence="2">
    <location>
        <begin position="73"/>
        <end position="93"/>
    </location>
</feature>
<feature type="compositionally biased region" description="Basic and acidic residues" evidence="2">
    <location>
        <begin position="9"/>
        <end position="21"/>
    </location>
</feature>
<feature type="compositionally biased region" description="Basic and acidic residues" evidence="2">
    <location>
        <begin position="81"/>
        <end position="93"/>
    </location>
</feature>
<reference key="1">
    <citation type="journal article" date="2008" name="PLoS ONE">
        <title>Survival in nuclear waste, extreme resistance, and potential applications gleaned from the genome sequence of Kineococcus radiotolerans SRS30216.</title>
        <authorList>
            <person name="Bagwell C.E."/>
            <person name="Bhat S."/>
            <person name="Hawkins G.M."/>
            <person name="Smith B.W."/>
            <person name="Biswas T."/>
            <person name="Hoover T.R."/>
            <person name="Saunders E."/>
            <person name="Han C.S."/>
            <person name="Tsodikov O.V."/>
            <person name="Shimkets L.J."/>
        </authorList>
    </citation>
    <scope>NUCLEOTIDE SEQUENCE [LARGE SCALE GENOMIC DNA]</scope>
    <source>
        <strain>ATCC BAA-149 / DSM 14245 / SRS30216</strain>
    </source>
</reference>
<protein>
    <recommendedName>
        <fullName evidence="1">Small ribosomal subunit protein uS19</fullName>
    </recommendedName>
    <alternativeName>
        <fullName evidence="3">30S ribosomal protein S19</fullName>
    </alternativeName>
</protein>
<proteinExistence type="inferred from homology"/>
<comment type="function">
    <text evidence="1">Protein S19 forms a complex with S13 that binds strongly to the 16S ribosomal RNA.</text>
</comment>
<comment type="similarity">
    <text evidence="1">Belongs to the universal ribosomal protein uS19 family.</text>
</comment>
<name>RS19_KINRD</name>
<dbReference type="EMBL" id="CP000750">
    <property type="protein sequence ID" value="ABS02181.1"/>
    <property type="molecule type" value="Genomic_DNA"/>
</dbReference>
<dbReference type="RefSeq" id="WP_012084977.1">
    <property type="nucleotide sequence ID" value="NC_009664.2"/>
</dbReference>
<dbReference type="SMR" id="A6W5U2"/>
<dbReference type="STRING" id="266940.Krad_0692"/>
<dbReference type="KEGG" id="kra:Krad_0692"/>
<dbReference type="eggNOG" id="COG0185">
    <property type="taxonomic scope" value="Bacteria"/>
</dbReference>
<dbReference type="HOGENOM" id="CLU_144911_0_1_11"/>
<dbReference type="OrthoDB" id="9797833at2"/>
<dbReference type="Proteomes" id="UP000001116">
    <property type="component" value="Chromosome"/>
</dbReference>
<dbReference type="GO" id="GO:0005737">
    <property type="term" value="C:cytoplasm"/>
    <property type="evidence" value="ECO:0007669"/>
    <property type="project" value="UniProtKB-ARBA"/>
</dbReference>
<dbReference type="GO" id="GO:0015935">
    <property type="term" value="C:small ribosomal subunit"/>
    <property type="evidence" value="ECO:0007669"/>
    <property type="project" value="InterPro"/>
</dbReference>
<dbReference type="GO" id="GO:0019843">
    <property type="term" value="F:rRNA binding"/>
    <property type="evidence" value="ECO:0007669"/>
    <property type="project" value="UniProtKB-UniRule"/>
</dbReference>
<dbReference type="GO" id="GO:0003735">
    <property type="term" value="F:structural constituent of ribosome"/>
    <property type="evidence" value="ECO:0007669"/>
    <property type="project" value="InterPro"/>
</dbReference>
<dbReference type="GO" id="GO:0000028">
    <property type="term" value="P:ribosomal small subunit assembly"/>
    <property type="evidence" value="ECO:0007669"/>
    <property type="project" value="TreeGrafter"/>
</dbReference>
<dbReference type="GO" id="GO:0006412">
    <property type="term" value="P:translation"/>
    <property type="evidence" value="ECO:0007669"/>
    <property type="project" value="UniProtKB-UniRule"/>
</dbReference>
<dbReference type="FunFam" id="3.30.860.10:FF:000001">
    <property type="entry name" value="30S ribosomal protein S19"/>
    <property type="match status" value="1"/>
</dbReference>
<dbReference type="Gene3D" id="3.30.860.10">
    <property type="entry name" value="30s Ribosomal Protein S19, Chain A"/>
    <property type="match status" value="1"/>
</dbReference>
<dbReference type="HAMAP" id="MF_00531">
    <property type="entry name" value="Ribosomal_uS19"/>
    <property type="match status" value="1"/>
</dbReference>
<dbReference type="InterPro" id="IPR002222">
    <property type="entry name" value="Ribosomal_uS19"/>
</dbReference>
<dbReference type="InterPro" id="IPR005732">
    <property type="entry name" value="Ribosomal_uS19_bac-type"/>
</dbReference>
<dbReference type="InterPro" id="IPR020934">
    <property type="entry name" value="Ribosomal_uS19_CS"/>
</dbReference>
<dbReference type="InterPro" id="IPR023575">
    <property type="entry name" value="Ribosomal_uS19_SF"/>
</dbReference>
<dbReference type="NCBIfam" id="TIGR01050">
    <property type="entry name" value="rpsS_bact"/>
    <property type="match status" value="1"/>
</dbReference>
<dbReference type="PANTHER" id="PTHR11880">
    <property type="entry name" value="RIBOSOMAL PROTEIN S19P FAMILY MEMBER"/>
    <property type="match status" value="1"/>
</dbReference>
<dbReference type="PANTHER" id="PTHR11880:SF8">
    <property type="entry name" value="SMALL RIBOSOMAL SUBUNIT PROTEIN US19M"/>
    <property type="match status" value="1"/>
</dbReference>
<dbReference type="Pfam" id="PF00203">
    <property type="entry name" value="Ribosomal_S19"/>
    <property type="match status" value="1"/>
</dbReference>
<dbReference type="PIRSF" id="PIRSF002144">
    <property type="entry name" value="Ribosomal_S19"/>
    <property type="match status" value="1"/>
</dbReference>
<dbReference type="PRINTS" id="PR00975">
    <property type="entry name" value="RIBOSOMALS19"/>
</dbReference>
<dbReference type="SUPFAM" id="SSF54570">
    <property type="entry name" value="Ribosomal protein S19"/>
    <property type="match status" value="1"/>
</dbReference>
<dbReference type="PROSITE" id="PS00323">
    <property type="entry name" value="RIBOSOMAL_S19"/>
    <property type="match status" value="1"/>
</dbReference>
<keyword id="KW-1185">Reference proteome</keyword>
<keyword id="KW-0687">Ribonucleoprotein</keyword>
<keyword id="KW-0689">Ribosomal protein</keyword>
<keyword id="KW-0694">RNA-binding</keyword>
<keyword id="KW-0699">rRNA-binding</keyword>